<evidence type="ECO:0000255" key="1">
    <source>
        <dbReference type="HAMAP-Rule" id="MF_00358"/>
    </source>
</evidence>
<evidence type="ECO:0000256" key="2">
    <source>
        <dbReference type="SAM" id="MobiDB-lite"/>
    </source>
</evidence>
<evidence type="ECO:0000305" key="3"/>
<feature type="chain" id="PRO_1000120679" description="Small ribosomal subunit protein bS21">
    <location>
        <begin position="1"/>
        <end position="71"/>
    </location>
</feature>
<feature type="region of interest" description="Disordered" evidence="2">
    <location>
        <begin position="39"/>
        <end position="71"/>
    </location>
</feature>
<feature type="compositionally biased region" description="Basic residues" evidence="2">
    <location>
        <begin position="45"/>
        <end position="59"/>
    </location>
</feature>
<feature type="compositionally biased region" description="Basic and acidic residues" evidence="2">
    <location>
        <begin position="60"/>
        <end position="71"/>
    </location>
</feature>
<keyword id="KW-0687">Ribonucleoprotein</keyword>
<keyword id="KW-0689">Ribosomal protein</keyword>
<reference key="1">
    <citation type="journal article" date="2008" name="BMC Genomics">
        <title>Genome sequence and rapid evolution of the rice pathogen Xanthomonas oryzae pv. oryzae PXO99A.</title>
        <authorList>
            <person name="Salzberg S.L."/>
            <person name="Sommer D.D."/>
            <person name="Schatz M.C."/>
            <person name="Phillippy A.M."/>
            <person name="Rabinowicz P.D."/>
            <person name="Tsuge S."/>
            <person name="Furutani A."/>
            <person name="Ochiai H."/>
            <person name="Delcher A.L."/>
            <person name="Kelley D."/>
            <person name="Madupu R."/>
            <person name="Puiu D."/>
            <person name="Radune D."/>
            <person name="Shumway M."/>
            <person name="Trapnell C."/>
            <person name="Aparna G."/>
            <person name="Jha G."/>
            <person name="Pandey A."/>
            <person name="Patil P.B."/>
            <person name="Ishihara H."/>
            <person name="Meyer D.F."/>
            <person name="Szurek B."/>
            <person name="Verdier V."/>
            <person name="Koebnik R."/>
            <person name="Dow J.M."/>
            <person name="Ryan R.P."/>
            <person name="Hirata H."/>
            <person name="Tsuyumu S."/>
            <person name="Won Lee S."/>
            <person name="Seo Y.-S."/>
            <person name="Sriariyanum M."/>
            <person name="Ronald P.C."/>
            <person name="Sonti R.V."/>
            <person name="Van Sluys M.-A."/>
            <person name="Leach J.E."/>
            <person name="White F.F."/>
            <person name="Bogdanove A.J."/>
        </authorList>
    </citation>
    <scope>NUCLEOTIDE SEQUENCE [LARGE SCALE GENOMIC DNA]</scope>
    <source>
        <strain>PXO99A</strain>
    </source>
</reference>
<organism>
    <name type="scientific">Xanthomonas oryzae pv. oryzae (strain PXO99A)</name>
    <dbReference type="NCBI Taxonomy" id="360094"/>
    <lineage>
        <taxon>Bacteria</taxon>
        <taxon>Pseudomonadati</taxon>
        <taxon>Pseudomonadota</taxon>
        <taxon>Gammaproteobacteria</taxon>
        <taxon>Lysobacterales</taxon>
        <taxon>Lysobacteraceae</taxon>
        <taxon>Xanthomonas</taxon>
    </lineage>
</organism>
<protein>
    <recommendedName>
        <fullName evidence="1">Small ribosomal subunit protein bS21</fullName>
    </recommendedName>
    <alternativeName>
        <fullName evidence="3">30S ribosomal protein S21</fullName>
    </alternativeName>
</protein>
<gene>
    <name evidence="1" type="primary">rpsU</name>
    <name type="ordered locus">PXO_04101</name>
</gene>
<proteinExistence type="inferred from homology"/>
<comment type="similarity">
    <text evidence="1">Belongs to the bacterial ribosomal protein bS21 family.</text>
</comment>
<sequence>MPSVKVRENEPFEFALRRFKRTCEKAGVLAETRKREFYEKPTQERKRKAAAAVKRQLRRSSRDVTKRQRLY</sequence>
<name>RS21_XANOP</name>
<accession>B2SLA2</accession>
<dbReference type="EMBL" id="CP000967">
    <property type="protein sequence ID" value="ACD57379.1"/>
    <property type="molecule type" value="Genomic_DNA"/>
</dbReference>
<dbReference type="RefSeq" id="WP_002808376.1">
    <property type="nucleotide sequence ID" value="NC_010717.2"/>
</dbReference>
<dbReference type="SMR" id="B2SLA2"/>
<dbReference type="GeneID" id="97512051"/>
<dbReference type="KEGG" id="xop:PXO_04101"/>
<dbReference type="eggNOG" id="COG0828">
    <property type="taxonomic scope" value="Bacteria"/>
</dbReference>
<dbReference type="HOGENOM" id="CLU_159258_1_0_6"/>
<dbReference type="Proteomes" id="UP000001740">
    <property type="component" value="Chromosome"/>
</dbReference>
<dbReference type="GO" id="GO:1990904">
    <property type="term" value="C:ribonucleoprotein complex"/>
    <property type="evidence" value="ECO:0007669"/>
    <property type="project" value="UniProtKB-KW"/>
</dbReference>
<dbReference type="GO" id="GO:0005840">
    <property type="term" value="C:ribosome"/>
    <property type="evidence" value="ECO:0007669"/>
    <property type="project" value="UniProtKB-KW"/>
</dbReference>
<dbReference type="GO" id="GO:0003735">
    <property type="term" value="F:structural constituent of ribosome"/>
    <property type="evidence" value="ECO:0007669"/>
    <property type="project" value="InterPro"/>
</dbReference>
<dbReference type="GO" id="GO:0006412">
    <property type="term" value="P:translation"/>
    <property type="evidence" value="ECO:0007669"/>
    <property type="project" value="UniProtKB-UniRule"/>
</dbReference>
<dbReference type="Gene3D" id="1.20.5.1150">
    <property type="entry name" value="Ribosomal protein S8"/>
    <property type="match status" value="1"/>
</dbReference>
<dbReference type="HAMAP" id="MF_00358">
    <property type="entry name" value="Ribosomal_bS21"/>
    <property type="match status" value="1"/>
</dbReference>
<dbReference type="InterPro" id="IPR001911">
    <property type="entry name" value="Ribosomal_bS21"/>
</dbReference>
<dbReference type="InterPro" id="IPR018278">
    <property type="entry name" value="Ribosomal_bS21_CS"/>
</dbReference>
<dbReference type="InterPro" id="IPR038380">
    <property type="entry name" value="Ribosomal_bS21_sf"/>
</dbReference>
<dbReference type="NCBIfam" id="TIGR00030">
    <property type="entry name" value="S21p"/>
    <property type="match status" value="1"/>
</dbReference>
<dbReference type="PANTHER" id="PTHR21109">
    <property type="entry name" value="MITOCHONDRIAL 28S RIBOSOMAL PROTEIN S21"/>
    <property type="match status" value="1"/>
</dbReference>
<dbReference type="PANTHER" id="PTHR21109:SF22">
    <property type="entry name" value="SMALL RIBOSOMAL SUBUNIT PROTEIN BS21"/>
    <property type="match status" value="1"/>
</dbReference>
<dbReference type="Pfam" id="PF01165">
    <property type="entry name" value="Ribosomal_S21"/>
    <property type="match status" value="1"/>
</dbReference>
<dbReference type="PRINTS" id="PR00976">
    <property type="entry name" value="RIBOSOMALS21"/>
</dbReference>
<dbReference type="PROSITE" id="PS01181">
    <property type="entry name" value="RIBOSOMAL_S21"/>
    <property type="match status" value="1"/>
</dbReference>